<reference key="1">
    <citation type="journal article" date="2006" name="FEBS J.">
        <title>Characterization of novel M-superfamily conotoxins with new disulfide linkage.</title>
        <authorList>
            <person name="Han Y.-H."/>
            <person name="Wang Q."/>
            <person name="Jiang H."/>
            <person name="Liu L."/>
            <person name="Xiao C."/>
            <person name="Yuan D.-D."/>
            <person name="Shao X.-X."/>
            <person name="Dai Q.-Y."/>
            <person name="Cheng J.-S."/>
            <person name="Chi C.-W."/>
        </authorList>
    </citation>
    <scope>NUCLEOTIDE SEQUENCE [MRNA]</scope>
    <scope>PROTEIN SEQUENCE OF 55-70</scope>
    <scope>AMIDATION AT ASP-70</scope>
    <scope>DISULFIDE BONDS</scope>
    <scope>MASS SPECTROMETRY</scope>
    <scope>SYNTHESIS OF 55-70</scope>
    <scope>BIOASSAY</scope>
    <scope>SUBCELLULAR LOCATION</scope>
    <source>
        <tissue>Venom</tissue>
        <tissue>Venom duct</tissue>
    </source>
</reference>
<reference key="2">
    <citation type="journal article" date="2022" name="Molecules">
        <title>Anti-ovarian cancer conotoxins identified from Conus venom.</title>
        <authorList>
            <person name="Ju S."/>
            <person name="Zhang Y."/>
            <person name="Guo X."/>
            <person name="Yan Q."/>
            <person name="Liu S."/>
            <person name="Ma B."/>
            <person name="Zhang M."/>
            <person name="Bao J."/>
            <person name="Luo S."/>
            <person name="Fu Y."/>
        </authorList>
    </citation>
    <scope>PROTEIN SEQUENCE OF 55-70</scope>
    <scope>IDENTIFICATION BY MASS SPECTROMETRY</scope>
    <scope>SUBCELLULAR LOCATION</scope>
    <scope>DISULFIDE BONDS</scope>
    <scope>ABSENCE OF AMIDATION</scope>
    <scope>SYNTHESIS OF 55-70</scope>
    <source>
        <tissue>Venom</tissue>
    </source>
</reference>
<reference key="3">
    <citation type="journal article" date="2007" name="FEBS J.">
        <title>Solution structure of an M-1 conotoxin with a novel disulfide linkage.</title>
        <authorList>
            <person name="Du W.-H."/>
            <person name="Han Y.-H."/>
            <person name="Huang F.-J."/>
            <person name="Li J."/>
            <person name="Chi C.-W."/>
            <person name="Fang W.-H."/>
        </authorList>
    </citation>
    <scope>STRUCTURE BY NMR OF 55-70</scope>
    <scope>DISULFIDE BONDS</scope>
</reference>
<proteinExistence type="evidence at protein level"/>
<organism>
    <name type="scientific">Conus marmoreus</name>
    <name type="common">Marble cone</name>
    <dbReference type="NCBI Taxonomy" id="42752"/>
    <lineage>
        <taxon>Eukaryota</taxon>
        <taxon>Metazoa</taxon>
        <taxon>Spiralia</taxon>
        <taxon>Lophotrochozoa</taxon>
        <taxon>Mollusca</taxon>
        <taxon>Gastropoda</taxon>
        <taxon>Caenogastropoda</taxon>
        <taxon>Neogastropoda</taxon>
        <taxon>Conoidea</taxon>
        <taxon>Conidae</taxon>
        <taxon>Conus</taxon>
    </lineage>
</organism>
<sequence length="71" mass="7976">MLKMGVVLFIVLVLFPLATLQLDADQPVERYAENKRLLNPDERRGIILHALGQRVCCPFGGCHELCYCCDG</sequence>
<keyword id="KW-0002">3D-structure</keyword>
<keyword id="KW-0027">Amidation</keyword>
<keyword id="KW-0903">Direct protein sequencing</keyword>
<keyword id="KW-1015">Disulfide bond</keyword>
<keyword id="KW-0528">Neurotoxin</keyword>
<keyword id="KW-0964">Secreted</keyword>
<keyword id="KW-0732">Signal</keyword>
<keyword id="KW-0800">Toxin</keyword>
<feature type="signal peptide" evidence="1">
    <location>
        <begin position="1"/>
        <end position="24"/>
    </location>
</feature>
<feature type="propeptide" id="PRO_0000289866" evidence="2">
    <location>
        <begin position="25"/>
        <end position="54"/>
    </location>
</feature>
<feature type="peptide" id="PRO_0000289867" description="Conotoxin mr3e" evidence="2 4">
    <location>
        <begin position="55"/>
        <end position="70"/>
    </location>
</feature>
<feature type="modified residue" description="Aspartic acid 1-amide; partial" evidence="2 4">
    <location>
        <position position="70"/>
    </location>
</feature>
<feature type="disulfide bond" evidence="2 3 9">
    <location>
        <begin position="56"/>
        <end position="68"/>
    </location>
</feature>
<feature type="disulfide bond" evidence="2 3 9">
    <location>
        <begin position="57"/>
        <end position="66"/>
    </location>
</feature>
<feature type="disulfide bond" evidence="2 3 9">
    <location>
        <begin position="62"/>
        <end position="69"/>
    </location>
</feature>
<feature type="turn" evidence="10">
    <location>
        <begin position="59"/>
        <end position="61"/>
    </location>
</feature>
<name>CM3E_CONMR</name>
<evidence type="ECO:0000255" key="1"/>
<evidence type="ECO:0000269" key="2">
    <source>
    </source>
</evidence>
<evidence type="ECO:0000269" key="3">
    <source>
    </source>
</evidence>
<evidence type="ECO:0000269" key="4">
    <source>
    </source>
</evidence>
<evidence type="ECO:0000303" key="5">
    <source>
    </source>
</evidence>
<evidence type="ECO:0000305" key="6"/>
<evidence type="ECO:0000305" key="7">
    <source>
    </source>
</evidence>
<evidence type="ECO:0000305" key="8">
    <source>
    </source>
</evidence>
<evidence type="ECO:0000312" key="9">
    <source>
        <dbReference type="PDB" id="2EFZ"/>
    </source>
</evidence>
<evidence type="ECO:0007829" key="10">
    <source>
        <dbReference type="PDB" id="2EFZ"/>
    </source>
</evidence>
<comment type="subcellular location">
    <subcellularLocation>
        <location evidence="2 4">Secreted</location>
    </subcellularLocation>
</comment>
<comment type="tissue specificity">
    <text evidence="7 8">Expressed by the venom duct.</text>
</comment>
<comment type="domain">
    <text evidence="6">The cysteine framework is III (CC-C-C-CC). Classified in the M-1 branch, since 1 residue stands between the fourth and the fifth cysteine residues.</text>
</comment>
<comment type="PTM">
    <text evidence="2 4">Has been found to be amidated by Han et al. (2006), and to be unmodified by Ju et al. (2022).</text>
</comment>
<comment type="PTM">
    <text evidence="4">Ju et al. (2022) describe a disulfide connectivity (C56-C62; C57-C68; C66-C69) that differs from that of Han and colleagues (2006 and 2007).</text>
</comment>
<comment type="mass spectrometry" mass="1743.3" method="Electrospray" evidence="2"/>
<comment type="miscellaneous">
    <text evidence="2">Negative results: Shows a very weak inhibition on Nav1.4 and Nav1.8 sodium channels. Intracranial injection into mice does not elicit symptoms.</text>
</comment>
<comment type="similarity">
    <text evidence="6">Belongs to the conotoxin M superfamily.</text>
</comment>
<protein>
    <recommendedName>
        <fullName evidence="5">Conotoxin mr3e</fullName>
    </recommendedName>
    <alternativeName>
        <fullName>Mr3.4</fullName>
    </alternativeName>
    <alternativeName>
        <fullName evidence="5">Mr3.7</fullName>
    </alternativeName>
</protein>
<dbReference type="EMBL" id="AY880683">
    <property type="protein sequence ID" value="AAW78560.1"/>
    <property type="molecule type" value="mRNA"/>
</dbReference>
<dbReference type="PDB" id="2EFZ">
    <property type="method" value="NMR"/>
    <property type="chains" value="A=55-70"/>
</dbReference>
<dbReference type="PDBsum" id="2EFZ"/>
<dbReference type="BMRB" id="Q5EHP3"/>
<dbReference type="SMR" id="Q5EHP3"/>
<dbReference type="ConoServer" id="1081">
    <property type="toxin name" value="MrIIIE precursor"/>
</dbReference>
<dbReference type="EvolutionaryTrace" id="Q5EHP3"/>
<dbReference type="GO" id="GO:0005576">
    <property type="term" value="C:extracellular region"/>
    <property type="evidence" value="ECO:0007669"/>
    <property type="project" value="UniProtKB-SubCell"/>
</dbReference>
<dbReference type="GO" id="GO:0008200">
    <property type="term" value="F:ion channel inhibitor activity"/>
    <property type="evidence" value="ECO:0007669"/>
    <property type="project" value="InterPro"/>
</dbReference>
<dbReference type="GO" id="GO:0090729">
    <property type="term" value="F:toxin activity"/>
    <property type="evidence" value="ECO:0007669"/>
    <property type="project" value="UniProtKB-KW"/>
</dbReference>
<dbReference type="InterPro" id="IPR004214">
    <property type="entry name" value="Conotoxin"/>
</dbReference>
<dbReference type="Pfam" id="PF02950">
    <property type="entry name" value="Conotoxin"/>
    <property type="match status" value="1"/>
</dbReference>
<accession>Q5EHP3</accession>